<organism>
    <name type="scientific">Phocaeicola vulgatus (strain ATCC 8482 / DSM 1447 / JCM 5826 / CCUG 4940 / NBRC 14291 / NCTC 11154)</name>
    <name type="common">Bacteroides vulgatus</name>
    <dbReference type="NCBI Taxonomy" id="435590"/>
    <lineage>
        <taxon>Bacteria</taxon>
        <taxon>Pseudomonadati</taxon>
        <taxon>Bacteroidota</taxon>
        <taxon>Bacteroidia</taxon>
        <taxon>Bacteroidales</taxon>
        <taxon>Bacteroidaceae</taxon>
        <taxon>Phocaeicola</taxon>
    </lineage>
</organism>
<keyword id="KW-0031">Aminopeptidase</keyword>
<keyword id="KW-0378">Hydrolase</keyword>
<keyword id="KW-0645">Protease</keyword>
<keyword id="KW-0720">Serine protease</keyword>
<keyword id="KW-0732">Signal</keyword>
<evidence type="ECO:0000250" key="1">
    <source>
        <dbReference type="UniProtKB" id="B2RKV3"/>
    </source>
</evidence>
<evidence type="ECO:0000250" key="2">
    <source>
        <dbReference type="UniProtKB" id="V5YM14"/>
    </source>
</evidence>
<evidence type="ECO:0000255" key="3"/>
<evidence type="ECO:0000269" key="4">
    <source>
    </source>
</evidence>
<evidence type="ECO:0000303" key="5">
    <source>
    </source>
</evidence>
<evidence type="ECO:0000305" key="6"/>
<evidence type="ECO:0000312" key="7">
    <source>
        <dbReference type="EMBL" id="ABR39912.1"/>
    </source>
</evidence>
<protein>
    <recommendedName>
        <fullName evidence="5">Dipeptidyl-peptidase 7</fullName>
        <shortName evidence="5">DPP7</shortName>
        <ecNumber evidence="4">3.4.14.-</ecNumber>
    </recommendedName>
</protein>
<dbReference type="EC" id="3.4.14.-" evidence="4"/>
<dbReference type="EMBL" id="CP000139">
    <property type="protein sequence ID" value="ABR39912.1"/>
    <property type="molecule type" value="Genomic_DNA"/>
</dbReference>
<dbReference type="RefSeq" id="WP_011965538.1">
    <property type="nucleotide sequence ID" value="NZ_CAXVNH010000011.1"/>
</dbReference>
<dbReference type="SMR" id="A6L2J8"/>
<dbReference type="STRING" id="435590.BVU_2253"/>
<dbReference type="MEROPS" id="S46.002"/>
<dbReference type="PaxDb" id="435590-BVU_2253"/>
<dbReference type="GeneID" id="5303217"/>
<dbReference type="KEGG" id="bvu:BVU_2253"/>
<dbReference type="eggNOG" id="COG3591">
    <property type="taxonomic scope" value="Bacteria"/>
</dbReference>
<dbReference type="HOGENOM" id="CLU_013776_0_0_10"/>
<dbReference type="BioCyc" id="BVUL435590:G1G59-2344-MONOMER"/>
<dbReference type="Proteomes" id="UP000002861">
    <property type="component" value="Chromosome"/>
</dbReference>
<dbReference type="GO" id="GO:0008239">
    <property type="term" value="F:dipeptidyl-peptidase activity"/>
    <property type="evidence" value="ECO:0000314"/>
    <property type="project" value="UniProtKB"/>
</dbReference>
<dbReference type="GO" id="GO:0070009">
    <property type="term" value="F:serine-type aminopeptidase activity"/>
    <property type="evidence" value="ECO:0007669"/>
    <property type="project" value="InterPro"/>
</dbReference>
<dbReference type="GO" id="GO:0043171">
    <property type="term" value="P:peptide catabolic process"/>
    <property type="evidence" value="ECO:0000314"/>
    <property type="project" value="UniProtKB"/>
</dbReference>
<dbReference type="GO" id="GO:0006508">
    <property type="term" value="P:proteolysis"/>
    <property type="evidence" value="ECO:0007669"/>
    <property type="project" value="UniProtKB-KW"/>
</dbReference>
<dbReference type="FunFam" id="2.40.10.10:FF:000128">
    <property type="entry name" value="S46 family peptidase"/>
    <property type="match status" value="1"/>
</dbReference>
<dbReference type="Gene3D" id="2.40.10.10">
    <property type="entry name" value="Trypsin-like serine proteases"/>
    <property type="match status" value="1"/>
</dbReference>
<dbReference type="InterPro" id="IPR019500">
    <property type="entry name" value="Pep_S46"/>
</dbReference>
<dbReference type="InterPro" id="IPR009003">
    <property type="entry name" value="Peptidase_S1_PA"/>
</dbReference>
<dbReference type="InterPro" id="IPR043504">
    <property type="entry name" value="Peptidase_S1_PA_chymotrypsin"/>
</dbReference>
<dbReference type="PANTHER" id="PTHR38469">
    <property type="entry name" value="PERIPLASMIC PEPTIDASE SUBFAMILY S1B"/>
    <property type="match status" value="1"/>
</dbReference>
<dbReference type="PANTHER" id="PTHR38469:SF1">
    <property type="entry name" value="PERIPLASMIC PEPTIDASE SUBFAMILY S1B"/>
    <property type="match status" value="1"/>
</dbReference>
<dbReference type="Pfam" id="PF10459">
    <property type="entry name" value="Peptidase_S46"/>
    <property type="match status" value="1"/>
</dbReference>
<dbReference type="SUPFAM" id="SSF50494">
    <property type="entry name" value="Trypsin-like serine proteases"/>
    <property type="match status" value="1"/>
</dbReference>
<accession>A6L2J8</accession>
<feature type="signal peptide" evidence="3">
    <location>
        <begin position="1"/>
        <end position="21"/>
    </location>
</feature>
<feature type="chain" id="PRO_5002698792" description="Dipeptidyl-peptidase 7">
    <location>
        <begin position="22"/>
        <end position="721"/>
    </location>
</feature>
<feature type="active site" description="Charge relay system" evidence="2">
    <location>
        <position position="87"/>
    </location>
</feature>
<feature type="active site" description="Charge relay system" evidence="2">
    <location>
        <position position="228"/>
    </location>
</feature>
<feature type="active site" description="Charge relay system" evidence="2">
    <location>
        <position position="656"/>
    </location>
</feature>
<feature type="site" description="Critical for substrate specificity of DPP7" evidence="1">
    <location>
        <position position="674"/>
    </location>
</feature>
<proteinExistence type="evidence at protein level"/>
<comment type="function">
    <text evidence="4">Catalyzes the removal of dipeptides from the N-terminus of oligopeptides. Most potently cleaves the synthetic substrate Met-Leu-methylcoumaryl-7-amide (Met-Leu-MCA), followed by Leu-Arg-MCA, while this enzyme does not hydrolyze Gly-Arg-, Gly-Gly-, Lys-Lys-, or Gly-Pro-MCA.</text>
</comment>
<comment type="similarity">
    <text evidence="6">Belongs to the peptidase S46 family.</text>
</comment>
<name>DPP7_PHOV8</name>
<reference key="1">
    <citation type="journal article" date="2007" name="PLoS Biol.">
        <title>Evolution of symbiotic bacteria in the distal human intestine.</title>
        <authorList>
            <person name="Xu J."/>
            <person name="Mahowald M.A."/>
            <person name="Ley R.E."/>
            <person name="Lozupone C.A."/>
            <person name="Hamady M."/>
            <person name="Martens E.C."/>
            <person name="Henrissat B."/>
            <person name="Coutinho P.M."/>
            <person name="Minx P."/>
            <person name="Latreille P."/>
            <person name="Cordum H."/>
            <person name="Van Brunt A."/>
            <person name="Kim K."/>
            <person name="Fulton R.S."/>
            <person name="Fulton L.A."/>
            <person name="Clifton S.W."/>
            <person name="Wilson R.K."/>
            <person name="Knight R.D."/>
            <person name="Gordon J.I."/>
        </authorList>
    </citation>
    <scope>NUCLEOTIDE SEQUENCE [LARGE SCALE GENOMIC DNA]</scope>
    <source>
        <strain>ATCC 8482 / DSM 1447 / JCM 5826 / CCUG 4940 / NBRC 14291 / NCTC 11154</strain>
    </source>
</reference>
<reference key="2">
    <citation type="journal article" date="2013" name="Biochimie">
        <title>Discrimination based on Gly and Arg/Ser at position 673 between dipeptidyl-peptidase (DPP) 7 and DPP11, widely distributed DPPs in pathogenic and environmental gram-negative bacteria.</title>
        <authorList>
            <person name="Rouf S.M."/>
            <person name="Ohara-Nemoto Y."/>
            <person name="Hoshino T."/>
            <person name="Fujiwara T."/>
            <person name="Ono T."/>
            <person name="Nemoto T.K."/>
        </authorList>
    </citation>
    <scope>FUNCTION</scope>
    <scope>CATALYTIC ACTIVITY</scope>
    <scope>SUBSTRATE SPECIFICITY</scope>
    <source>
        <strain>ATCC 8482 / DSM 1447 / JCM 5826 / CCUG 4940 / NBRC 14291 / NCTC 11154</strain>
    </source>
</reference>
<gene>
    <name type="primary">dpp7</name>
    <name evidence="7" type="ordered locus">BVU_2253</name>
</gene>
<sequence>MKKFKLLLLALMCVAFLPSKADEGMWLLQLMQEQHLADRMKAQGLLLEADDIYNPNRVSLKDAVGIFGGGCTGEIISPDGLILTNHHCGYGAIQQHSSVEHDYLTDGFWAKSRKEELPTPGLKFKFVERIVDVTDKVNNKVKSGEVKEEETFEYDFLKKLADEELKASDLNGKAGISAQALPFYAGNKFYLIYLKTYSDVRMVAAPPSSIGKFGGETDNWMWPRHTCDFSVFRIYADANGEPAEYNENNVPLKAKKHLAISLKGINEGDYAMIMGFPGSTNRYLTQSEVKQRMHSTNEPRIRIRGVRQDVLKKEMAASDKVRIQYASKYAGSSNYWKNSIGMNKAIIDNKVLETKAEQEAKFAAFAKAKGNTDYEKVVSEIDAAIEKSNPILYNYTCFREVFQGGIEFGTPYLILDKLKDAIKNKDKEAINKNIETLKKVYADIHNKDYDHEVDRKVAKALLPLYAEMVPADALPAFYTTIQKDFKGNYDAYVDHCYDNSIFSNEANFNKFIKKPTVKAIEKDPMTAYVRAKYDLMDKLGNELAESMKGMDLLHKTYVRGLCEMYSPEPKAPDANFTIRLTYGNVKSYNPKDGVHYKYYTTLKGVMEKEDPTNPEFVVPAKLKELYEAKDFGRYALPNGDMPACFLTTNDITGGNSGSPVINGNGELIGAAFDGNWESLSGDINFDNNLQRCIAVDIRYVLFIIDKLGGCKHLIDEMTIVE</sequence>